<accession>A1SMQ5</accession>
<feature type="chain" id="PRO_1000082145" description="Succinate--CoA ligase [ADP-forming] subunit beta">
    <location>
        <begin position="1"/>
        <end position="386"/>
    </location>
</feature>
<feature type="domain" description="ATP-grasp" evidence="1">
    <location>
        <begin position="9"/>
        <end position="235"/>
    </location>
</feature>
<feature type="binding site" evidence="1">
    <location>
        <position position="44"/>
    </location>
    <ligand>
        <name>ATP</name>
        <dbReference type="ChEBI" id="CHEBI:30616"/>
    </ligand>
</feature>
<feature type="binding site" evidence="1">
    <location>
        <begin position="51"/>
        <end position="53"/>
    </location>
    <ligand>
        <name>ATP</name>
        <dbReference type="ChEBI" id="CHEBI:30616"/>
    </ligand>
</feature>
<feature type="binding site" evidence="1">
    <location>
        <position position="93"/>
    </location>
    <ligand>
        <name>ATP</name>
        <dbReference type="ChEBI" id="CHEBI:30616"/>
    </ligand>
</feature>
<feature type="binding site" evidence="1">
    <location>
        <position position="98"/>
    </location>
    <ligand>
        <name>ATP</name>
        <dbReference type="ChEBI" id="CHEBI:30616"/>
    </ligand>
</feature>
<feature type="binding site" evidence="1">
    <location>
        <position position="190"/>
    </location>
    <ligand>
        <name>Mg(2+)</name>
        <dbReference type="ChEBI" id="CHEBI:18420"/>
    </ligand>
</feature>
<feature type="binding site" evidence="1">
    <location>
        <position position="204"/>
    </location>
    <ligand>
        <name>Mg(2+)</name>
        <dbReference type="ChEBI" id="CHEBI:18420"/>
    </ligand>
</feature>
<feature type="binding site" evidence="1">
    <location>
        <position position="255"/>
    </location>
    <ligand>
        <name>substrate</name>
        <note>ligand shared with subunit alpha</note>
    </ligand>
</feature>
<feature type="binding site" evidence="1">
    <location>
        <begin position="317"/>
        <end position="319"/>
    </location>
    <ligand>
        <name>substrate</name>
        <note>ligand shared with subunit alpha</note>
    </ligand>
</feature>
<sequence length="386" mass="40799">MDLMEYQAKELFAKHDVPVTLGIVAHTPDEAQAAAEQLGVVVVKAQVKAGGRGKAGGVKLAKTPEEARTHAEAILGMEIKGLRVNRVLIAPAASIEEEYYFSFLLDRANRRYLCIASVEGGVEIEEVAKTNPDAVRQIPIDPGAGVDEAKAREIVADAKFPEALTEQAVQTVLALWKVFVEEDATLVEVNPLARLAGDKLEALDGKVSLDENAEFRHEEHASFVIREEEDPLESAAKDKGLNYVKLDGSVGIIGNGAGLVMSTLDVVAYAGEKHGGVKPANFLDIGGGANAQVMADGLHVILGDEQVKAVFVNVFGGITACDEVANGIVGALDILGEDATKPLVIRLDGNNADEGRRILTEAAHPLVTMVDTMDGAADKAAELANA</sequence>
<evidence type="ECO:0000255" key="1">
    <source>
        <dbReference type="HAMAP-Rule" id="MF_00558"/>
    </source>
</evidence>
<organism>
    <name type="scientific">Nocardioides sp. (strain ATCC BAA-499 / JS614)</name>
    <dbReference type="NCBI Taxonomy" id="196162"/>
    <lineage>
        <taxon>Bacteria</taxon>
        <taxon>Bacillati</taxon>
        <taxon>Actinomycetota</taxon>
        <taxon>Actinomycetes</taxon>
        <taxon>Propionibacteriales</taxon>
        <taxon>Nocardioidaceae</taxon>
        <taxon>Nocardioides</taxon>
    </lineage>
</organism>
<keyword id="KW-0067">ATP-binding</keyword>
<keyword id="KW-0436">Ligase</keyword>
<keyword id="KW-0460">Magnesium</keyword>
<keyword id="KW-0479">Metal-binding</keyword>
<keyword id="KW-0547">Nucleotide-binding</keyword>
<keyword id="KW-1185">Reference proteome</keyword>
<keyword id="KW-0816">Tricarboxylic acid cycle</keyword>
<comment type="function">
    <text evidence="1">Succinyl-CoA synthetase functions in the citric acid cycle (TCA), coupling the hydrolysis of succinyl-CoA to the synthesis of either ATP or GTP and thus represents the only step of substrate-level phosphorylation in the TCA. The beta subunit provides nucleotide specificity of the enzyme and binds the substrate succinate, while the binding sites for coenzyme A and phosphate are found in the alpha subunit.</text>
</comment>
<comment type="catalytic activity">
    <reaction evidence="1">
        <text>succinate + ATP + CoA = succinyl-CoA + ADP + phosphate</text>
        <dbReference type="Rhea" id="RHEA:17661"/>
        <dbReference type="ChEBI" id="CHEBI:30031"/>
        <dbReference type="ChEBI" id="CHEBI:30616"/>
        <dbReference type="ChEBI" id="CHEBI:43474"/>
        <dbReference type="ChEBI" id="CHEBI:57287"/>
        <dbReference type="ChEBI" id="CHEBI:57292"/>
        <dbReference type="ChEBI" id="CHEBI:456216"/>
        <dbReference type="EC" id="6.2.1.5"/>
    </reaction>
    <physiologicalReaction direction="right-to-left" evidence="1">
        <dbReference type="Rhea" id="RHEA:17663"/>
    </physiologicalReaction>
</comment>
<comment type="catalytic activity">
    <reaction evidence="1">
        <text>GTP + succinate + CoA = succinyl-CoA + GDP + phosphate</text>
        <dbReference type="Rhea" id="RHEA:22120"/>
        <dbReference type="ChEBI" id="CHEBI:30031"/>
        <dbReference type="ChEBI" id="CHEBI:37565"/>
        <dbReference type="ChEBI" id="CHEBI:43474"/>
        <dbReference type="ChEBI" id="CHEBI:57287"/>
        <dbReference type="ChEBI" id="CHEBI:57292"/>
        <dbReference type="ChEBI" id="CHEBI:58189"/>
    </reaction>
    <physiologicalReaction direction="right-to-left" evidence="1">
        <dbReference type="Rhea" id="RHEA:22122"/>
    </physiologicalReaction>
</comment>
<comment type="cofactor">
    <cofactor evidence="1">
        <name>Mg(2+)</name>
        <dbReference type="ChEBI" id="CHEBI:18420"/>
    </cofactor>
    <text evidence="1">Binds 1 Mg(2+) ion per subunit.</text>
</comment>
<comment type="pathway">
    <text evidence="1">Carbohydrate metabolism; tricarboxylic acid cycle; succinate from succinyl-CoA (ligase route): step 1/1.</text>
</comment>
<comment type="subunit">
    <text evidence="1">Heterotetramer of two alpha and two beta subunits.</text>
</comment>
<comment type="similarity">
    <text evidence="1">Belongs to the succinate/malate CoA ligase beta subunit family.</text>
</comment>
<protein>
    <recommendedName>
        <fullName evidence="1">Succinate--CoA ligase [ADP-forming] subunit beta</fullName>
        <ecNumber evidence="1">6.2.1.5</ecNumber>
    </recommendedName>
    <alternativeName>
        <fullName evidence="1">Succinyl-CoA synthetase subunit beta</fullName>
        <shortName evidence="1">SCS-beta</shortName>
    </alternativeName>
</protein>
<reference key="1">
    <citation type="submission" date="2006-12" db="EMBL/GenBank/DDBJ databases">
        <title>Complete sequence of chromosome 1 of Nocardioides sp. JS614.</title>
        <authorList>
            <person name="Copeland A."/>
            <person name="Lucas S."/>
            <person name="Lapidus A."/>
            <person name="Barry K."/>
            <person name="Detter J.C."/>
            <person name="Glavina del Rio T."/>
            <person name="Hammon N."/>
            <person name="Israni S."/>
            <person name="Dalin E."/>
            <person name="Tice H."/>
            <person name="Pitluck S."/>
            <person name="Thompson L.S."/>
            <person name="Brettin T."/>
            <person name="Bruce D."/>
            <person name="Han C."/>
            <person name="Tapia R."/>
            <person name="Schmutz J."/>
            <person name="Larimer F."/>
            <person name="Land M."/>
            <person name="Hauser L."/>
            <person name="Kyrpides N."/>
            <person name="Kim E."/>
            <person name="Mattes T."/>
            <person name="Gossett J."/>
            <person name="Richardson P."/>
        </authorList>
    </citation>
    <scope>NUCLEOTIDE SEQUENCE [LARGE SCALE GENOMIC DNA]</scope>
    <source>
        <strain>ATCC BAA-499 / JS614</strain>
    </source>
</reference>
<proteinExistence type="inferred from homology"/>
<dbReference type="EC" id="6.2.1.5" evidence="1"/>
<dbReference type="EMBL" id="CP000509">
    <property type="protein sequence ID" value="ABL83090.1"/>
    <property type="molecule type" value="Genomic_DNA"/>
</dbReference>
<dbReference type="RefSeq" id="WP_011757021.1">
    <property type="nucleotide sequence ID" value="NC_008699.1"/>
</dbReference>
<dbReference type="SMR" id="A1SMQ5"/>
<dbReference type="STRING" id="196162.Noca_3590"/>
<dbReference type="KEGG" id="nca:Noca_3590"/>
<dbReference type="eggNOG" id="COG0045">
    <property type="taxonomic scope" value="Bacteria"/>
</dbReference>
<dbReference type="HOGENOM" id="CLU_037430_0_2_11"/>
<dbReference type="OrthoDB" id="9802602at2"/>
<dbReference type="UniPathway" id="UPA00223">
    <property type="reaction ID" value="UER00999"/>
</dbReference>
<dbReference type="Proteomes" id="UP000000640">
    <property type="component" value="Chromosome"/>
</dbReference>
<dbReference type="GO" id="GO:0005829">
    <property type="term" value="C:cytosol"/>
    <property type="evidence" value="ECO:0007669"/>
    <property type="project" value="TreeGrafter"/>
</dbReference>
<dbReference type="GO" id="GO:0042709">
    <property type="term" value="C:succinate-CoA ligase complex"/>
    <property type="evidence" value="ECO:0007669"/>
    <property type="project" value="TreeGrafter"/>
</dbReference>
<dbReference type="GO" id="GO:0005524">
    <property type="term" value="F:ATP binding"/>
    <property type="evidence" value="ECO:0007669"/>
    <property type="project" value="UniProtKB-UniRule"/>
</dbReference>
<dbReference type="GO" id="GO:0000287">
    <property type="term" value="F:magnesium ion binding"/>
    <property type="evidence" value="ECO:0007669"/>
    <property type="project" value="UniProtKB-UniRule"/>
</dbReference>
<dbReference type="GO" id="GO:0004775">
    <property type="term" value="F:succinate-CoA ligase (ADP-forming) activity"/>
    <property type="evidence" value="ECO:0007669"/>
    <property type="project" value="UniProtKB-UniRule"/>
</dbReference>
<dbReference type="GO" id="GO:0004776">
    <property type="term" value="F:succinate-CoA ligase (GDP-forming) activity"/>
    <property type="evidence" value="ECO:0007669"/>
    <property type="project" value="RHEA"/>
</dbReference>
<dbReference type="GO" id="GO:0006104">
    <property type="term" value="P:succinyl-CoA metabolic process"/>
    <property type="evidence" value="ECO:0007669"/>
    <property type="project" value="TreeGrafter"/>
</dbReference>
<dbReference type="GO" id="GO:0006099">
    <property type="term" value="P:tricarboxylic acid cycle"/>
    <property type="evidence" value="ECO:0007669"/>
    <property type="project" value="UniProtKB-UniRule"/>
</dbReference>
<dbReference type="FunFam" id="3.30.1490.20:FF:000014">
    <property type="entry name" value="Succinate--CoA ligase [ADP-forming] subunit beta"/>
    <property type="match status" value="1"/>
</dbReference>
<dbReference type="FunFam" id="3.30.470.20:FF:000002">
    <property type="entry name" value="Succinate--CoA ligase [ADP-forming] subunit beta"/>
    <property type="match status" value="1"/>
</dbReference>
<dbReference type="FunFam" id="3.40.50.261:FF:000007">
    <property type="entry name" value="Succinate--CoA ligase [ADP-forming] subunit beta"/>
    <property type="match status" value="1"/>
</dbReference>
<dbReference type="Gene3D" id="3.30.1490.20">
    <property type="entry name" value="ATP-grasp fold, A domain"/>
    <property type="match status" value="1"/>
</dbReference>
<dbReference type="Gene3D" id="3.30.470.20">
    <property type="entry name" value="ATP-grasp fold, B domain"/>
    <property type="match status" value="1"/>
</dbReference>
<dbReference type="Gene3D" id="3.40.50.261">
    <property type="entry name" value="Succinyl-CoA synthetase domains"/>
    <property type="match status" value="1"/>
</dbReference>
<dbReference type="HAMAP" id="MF_00558">
    <property type="entry name" value="Succ_CoA_beta"/>
    <property type="match status" value="1"/>
</dbReference>
<dbReference type="InterPro" id="IPR011761">
    <property type="entry name" value="ATP-grasp"/>
</dbReference>
<dbReference type="InterPro" id="IPR013650">
    <property type="entry name" value="ATP-grasp_succ-CoA_synth-type"/>
</dbReference>
<dbReference type="InterPro" id="IPR013815">
    <property type="entry name" value="ATP_grasp_subdomain_1"/>
</dbReference>
<dbReference type="InterPro" id="IPR017866">
    <property type="entry name" value="Succ-CoA_synthase_bsu_CS"/>
</dbReference>
<dbReference type="InterPro" id="IPR005811">
    <property type="entry name" value="SUCC_ACL_C"/>
</dbReference>
<dbReference type="InterPro" id="IPR005809">
    <property type="entry name" value="Succ_CoA_ligase-like_bsu"/>
</dbReference>
<dbReference type="InterPro" id="IPR016102">
    <property type="entry name" value="Succinyl-CoA_synth-like"/>
</dbReference>
<dbReference type="NCBIfam" id="NF001913">
    <property type="entry name" value="PRK00696.1"/>
    <property type="match status" value="1"/>
</dbReference>
<dbReference type="NCBIfam" id="TIGR01016">
    <property type="entry name" value="sucCoAbeta"/>
    <property type="match status" value="1"/>
</dbReference>
<dbReference type="PANTHER" id="PTHR11815:SF10">
    <property type="entry name" value="SUCCINATE--COA LIGASE [GDP-FORMING] SUBUNIT BETA, MITOCHONDRIAL"/>
    <property type="match status" value="1"/>
</dbReference>
<dbReference type="PANTHER" id="PTHR11815">
    <property type="entry name" value="SUCCINYL-COA SYNTHETASE BETA CHAIN"/>
    <property type="match status" value="1"/>
</dbReference>
<dbReference type="Pfam" id="PF08442">
    <property type="entry name" value="ATP-grasp_2"/>
    <property type="match status" value="1"/>
</dbReference>
<dbReference type="Pfam" id="PF00549">
    <property type="entry name" value="Ligase_CoA"/>
    <property type="match status" value="1"/>
</dbReference>
<dbReference type="PIRSF" id="PIRSF001554">
    <property type="entry name" value="SucCS_beta"/>
    <property type="match status" value="1"/>
</dbReference>
<dbReference type="SUPFAM" id="SSF56059">
    <property type="entry name" value="Glutathione synthetase ATP-binding domain-like"/>
    <property type="match status" value="1"/>
</dbReference>
<dbReference type="SUPFAM" id="SSF52210">
    <property type="entry name" value="Succinyl-CoA synthetase domains"/>
    <property type="match status" value="1"/>
</dbReference>
<dbReference type="PROSITE" id="PS50975">
    <property type="entry name" value="ATP_GRASP"/>
    <property type="match status" value="1"/>
</dbReference>
<dbReference type="PROSITE" id="PS01217">
    <property type="entry name" value="SUCCINYL_COA_LIG_3"/>
    <property type="match status" value="1"/>
</dbReference>
<gene>
    <name evidence="1" type="primary">sucC</name>
    <name type="ordered locus">Noca_3590</name>
</gene>
<name>SUCC_NOCSJ</name>